<keyword id="KW-0067">ATP-binding</keyword>
<keyword id="KW-0436">Ligase</keyword>
<keyword id="KW-0547">Nucleotide-binding</keyword>
<keyword id="KW-0554">One-carbon metabolism</keyword>
<accession>Q1J6F7</accession>
<proteinExistence type="inferred from homology"/>
<organism>
    <name type="scientific">Streptococcus pyogenes serotype M4 (strain MGAS10750)</name>
    <dbReference type="NCBI Taxonomy" id="370554"/>
    <lineage>
        <taxon>Bacteria</taxon>
        <taxon>Bacillati</taxon>
        <taxon>Bacillota</taxon>
        <taxon>Bacilli</taxon>
        <taxon>Lactobacillales</taxon>
        <taxon>Streptococcaceae</taxon>
        <taxon>Streptococcus</taxon>
    </lineage>
</organism>
<reference key="1">
    <citation type="journal article" date="2006" name="Proc. Natl. Acad. Sci. U.S.A.">
        <title>Molecular genetic anatomy of inter- and intraserotype variation in the human bacterial pathogen group A Streptococcus.</title>
        <authorList>
            <person name="Beres S.B."/>
            <person name="Richter E.W."/>
            <person name="Nagiec M.J."/>
            <person name="Sumby P."/>
            <person name="Porcella S.F."/>
            <person name="DeLeo F.R."/>
            <person name="Musser J.M."/>
        </authorList>
    </citation>
    <scope>NUCLEOTIDE SEQUENCE [LARGE SCALE GENOMIC DNA]</scope>
    <source>
        <strain>MGAS10750</strain>
    </source>
</reference>
<protein>
    <recommendedName>
        <fullName evidence="1">Formate--tetrahydrofolate ligase 1</fullName>
        <ecNumber evidence="1">6.3.4.3</ecNumber>
    </recommendedName>
    <alternativeName>
        <fullName evidence="1">Formyltetrahydrofolate synthetase 1</fullName>
        <shortName evidence="1">FHS 1</shortName>
        <shortName evidence="1">FTHFS 1</shortName>
    </alternativeName>
</protein>
<dbReference type="EC" id="6.3.4.3" evidence="1"/>
<dbReference type="EMBL" id="CP000262">
    <property type="protein sequence ID" value="ABF38026.1"/>
    <property type="molecule type" value="Genomic_DNA"/>
</dbReference>
<dbReference type="SMR" id="Q1J6F7"/>
<dbReference type="KEGG" id="spi:MGAS10750_Spy1076"/>
<dbReference type="HOGENOM" id="CLU_003601_3_3_9"/>
<dbReference type="UniPathway" id="UPA00193"/>
<dbReference type="Proteomes" id="UP000002434">
    <property type="component" value="Chromosome"/>
</dbReference>
<dbReference type="GO" id="GO:0005524">
    <property type="term" value="F:ATP binding"/>
    <property type="evidence" value="ECO:0007669"/>
    <property type="project" value="UniProtKB-UniRule"/>
</dbReference>
<dbReference type="GO" id="GO:0004329">
    <property type="term" value="F:formate-tetrahydrofolate ligase activity"/>
    <property type="evidence" value="ECO:0007669"/>
    <property type="project" value="UniProtKB-UniRule"/>
</dbReference>
<dbReference type="GO" id="GO:0035999">
    <property type="term" value="P:tetrahydrofolate interconversion"/>
    <property type="evidence" value="ECO:0007669"/>
    <property type="project" value="UniProtKB-UniRule"/>
</dbReference>
<dbReference type="CDD" id="cd00477">
    <property type="entry name" value="FTHFS"/>
    <property type="match status" value="1"/>
</dbReference>
<dbReference type="FunFam" id="3.30.1510.10:FF:000001">
    <property type="entry name" value="Formate--tetrahydrofolate ligase"/>
    <property type="match status" value="1"/>
</dbReference>
<dbReference type="FunFam" id="3.10.410.10:FF:000001">
    <property type="entry name" value="Putative formate--tetrahydrofolate ligase"/>
    <property type="match status" value="1"/>
</dbReference>
<dbReference type="Gene3D" id="3.30.1510.10">
    <property type="entry name" value="Domain 2, N(10)-formyltetrahydrofolate synthetase"/>
    <property type="match status" value="1"/>
</dbReference>
<dbReference type="Gene3D" id="3.10.410.10">
    <property type="entry name" value="Formyltetrahydrofolate synthetase, domain 3"/>
    <property type="match status" value="1"/>
</dbReference>
<dbReference type="Gene3D" id="3.40.50.300">
    <property type="entry name" value="P-loop containing nucleotide triphosphate hydrolases"/>
    <property type="match status" value="1"/>
</dbReference>
<dbReference type="HAMAP" id="MF_01543">
    <property type="entry name" value="FTHFS"/>
    <property type="match status" value="1"/>
</dbReference>
<dbReference type="InterPro" id="IPR000559">
    <property type="entry name" value="Formate_THF_ligase"/>
</dbReference>
<dbReference type="InterPro" id="IPR020628">
    <property type="entry name" value="Formate_THF_ligase_CS"/>
</dbReference>
<dbReference type="InterPro" id="IPR027417">
    <property type="entry name" value="P-loop_NTPase"/>
</dbReference>
<dbReference type="NCBIfam" id="NF010030">
    <property type="entry name" value="PRK13505.1"/>
    <property type="match status" value="1"/>
</dbReference>
<dbReference type="Pfam" id="PF01268">
    <property type="entry name" value="FTHFS"/>
    <property type="match status" value="1"/>
</dbReference>
<dbReference type="SUPFAM" id="SSF52540">
    <property type="entry name" value="P-loop containing nucleoside triphosphate hydrolases"/>
    <property type="match status" value="1"/>
</dbReference>
<dbReference type="PROSITE" id="PS00721">
    <property type="entry name" value="FTHFS_1"/>
    <property type="match status" value="1"/>
</dbReference>
<dbReference type="PROSITE" id="PS00722">
    <property type="entry name" value="FTHFS_2"/>
    <property type="match status" value="1"/>
</dbReference>
<evidence type="ECO:0000255" key="1">
    <source>
        <dbReference type="HAMAP-Rule" id="MF_01543"/>
    </source>
</evidence>
<name>FTHS1_STRPF</name>
<feature type="chain" id="PRO_0000293065" description="Formate--tetrahydrofolate ligase 1">
    <location>
        <begin position="1"/>
        <end position="556"/>
    </location>
</feature>
<feature type="binding site" evidence="1">
    <location>
        <begin position="65"/>
        <end position="72"/>
    </location>
    <ligand>
        <name>ATP</name>
        <dbReference type="ChEBI" id="CHEBI:30616"/>
    </ligand>
</feature>
<gene>
    <name evidence="1" type="primary">fhs1</name>
    <name type="ordered locus">MGAS10750_Spy1076</name>
</gene>
<comment type="catalytic activity">
    <reaction evidence="1">
        <text>(6S)-5,6,7,8-tetrahydrofolate + formate + ATP = (6R)-10-formyltetrahydrofolate + ADP + phosphate</text>
        <dbReference type="Rhea" id="RHEA:20221"/>
        <dbReference type="ChEBI" id="CHEBI:15740"/>
        <dbReference type="ChEBI" id="CHEBI:30616"/>
        <dbReference type="ChEBI" id="CHEBI:43474"/>
        <dbReference type="ChEBI" id="CHEBI:57453"/>
        <dbReference type="ChEBI" id="CHEBI:195366"/>
        <dbReference type="ChEBI" id="CHEBI:456216"/>
        <dbReference type="EC" id="6.3.4.3"/>
    </reaction>
</comment>
<comment type="pathway">
    <text evidence="1">One-carbon metabolism; tetrahydrofolate interconversion.</text>
</comment>
<comment type="similarity">
    <text evidence="1">Belongs to the formate--tetrahydrofolate ligase family.</text>
</comment>
<sequence length="556" mass="59589">MKSDIEIAQSVALQPITDIVKKVGIDGDDIELYGKYKAKLSFEKMKAVEANEPGKLILVTAINPTPAGEGKSTMSIGLADALNQMGKKTMLALREPSLGPVMGIKGGAAGGGYAQVLPMEDINLHFTGDMHAITTANNALSALIDNHLQQGNDLGIDPRRIIWKRVLDLNDRALRQVIVGLGSPVNGVPREDGFDITVASEIMAILCLATDLKDLKKRLADIVVAYTYDRKPVYVRDLKVEGALTLILKDAIKPNLVQTIYGTPALIHGGPFANIAHGCNSVLATSTALRLADYTVTEAGFGADLGAEKFLNIKVPNLPKAPDAIVIVATLRALKMHGGVAKSDLAAENCEAVRLGFANLKRHVENMRQFKVPVVVAINEFVADTEAEIATLKALCEEIKVPVELASVWANGAEGGIALAKTVVRVIDQEAADYKRLYSDEDTLEEKVINIVTQIYDGKAVQFGPKAKTQLKQFAEFGWDKLPVCMAKTQYSFSDNPSLLGAPTDFDITIREFVPKTGAGFIVGLTGDVMTMPGLPKVPAAMAMDVAENGTALGLF</sequence>